<comment type="function">
    <text evidence="1">Catalyzes the hydrolytic deamination of adenosine and 2-deoxyadenosine.</text>
</comment>
<comment type="catalytic activity">
    <reaction evidence="1">
        <text>adenosine + H2O + H(+) = inosine + NH4(+)</text>
        <dbReference type="Rhea" id="RHEA:24408"/>
        <dbReference type="ChEBI" id="CHEBI:15377"/>
        <dbReference type="ChEBI" id="CHEBI:15378"/>
        <dbReference type="ChEBI" id="CHEBI:16335"/>
        <dbReference type="ChEBI" id="CHEBI:17596"/>
        <dbReference type="ChEBI" id="CHEBI:28938"/>
        <dbReference type="EC" id="3.5.4.4"/>
    </reaction>
    <physiologicalReaction direction="left-to-right" evidence="1">
        <dbReference type="Rhea" id="RHEA:24409"/>
    </physiologicalReaction>
</comment>
<comment type="catalytic activity">
    <reaction evidence="1">
        <text>2'-deoxyadenosine + H2O + H(+) = 2'-deoxyinosine + NH4(+)</text>
        <dbReference type="Rhea" id="RHEA:28190"/>
        <dbReference type="ChEBI" id="CHEBI:15377"/>
        <dbReference type="ChEBI" id="CHEBI:15378"/>
        <dbReference type="ChEBI" id="CHEBI:17256"/>
        <dbReference type="ChEBI" id="CHEBI:28938"/>
        <dbReference type="ChEBI" id="CHEBI:28997"/>
        <dbReference type="EC" id="3.5.4.4"/>
    </reaction>
    <physiologicalReaction direction="left-to-right" evidence="1">
        <dbReference type="Rhea" id="RHEA:28191"/>
    </physiologicalReaction>
</comment>
<comment type="cofactor">
    <cofactor evidence="1">
        <name>Zn(2+)</name>
        <dbReference type="ChEBI" id="CHEBI:29105"/>
    </cofactor>
    <text evidence="1">Binds 1 zinc ion per subunit.</text>
</comment>
<comment type="similarity">
    <text evidence="1">Belongs to the metallo-dependent hydrolases superfamily. Adenosine and AMP deaminases family. Adenosine deaminase subfamily.</text>
</comment>
<proteinExistence type="inferred from homology"/>
<organism>
    <name type="scientific">Yersinia pseudotuberculosis serotype IB (strain PB1/+)</name>
    <dbReference type="NCBI Taxonomy" id="502801"/>
    <lineage>
        <taxon>Bacteria</taxon>
        <taxon>Pseudomonadati</taxon>
        <taxon>Pseudomonadota</taxon>
        <taxon>Gammaproteobacteria</taxon>
        <taxon>Enterobacterales</taxon>
        <taxon>Yersiniaceae</taxon>
        <taxon>Yersinia</taxon>
    </lineage>
</organism>
<protein>
    <recommendedName>
        <fullName evidence="1">Adenosine deaminase</fullName>
        <ecNumber evidence="1">3.5.4.4</ecNumber>
    </recommendedName>
    <alternativeName>
        <fullName evidence="1">Adenosine aminohydrolase</fullName>
    </alternativeName>
</protein>
<evidence type="ECO:0000255" key="1">
    <source>
        <dbReference type="HAMAP-Rule" id="MF_00540"/>
    </source>
</evidence>
<reference key="1">
    <citation type="submission" date="2008-04" db="EMBL/GenBank/DDBJ databases">
        <title>Complete sequence of Yersinia pseudotuberculosis PB1/+.</title>
        <authorList>
            <person name="Copeland A."/>
            <person name="Lucas S."/>
            <person name="Lapidus A."/>
            <person name="Glavina del Rio T."/>
            <person name="Dalin E."/>
            <person name="Tice H."/>
            <person name="Bruce D."/>
            <person name="Goodwin L."/>
            <person name="Pitluck S."/>
            <person name="Munk A.C."/>
            <person name="Brettin T."/>
            <person name="Detter J.C."/>
            <person name="Han C."/>
            <person name="Tapia R."/>
            <person name="Schmutz J."/>
            <person name="Larimer F."/>
            <person name="Land M."/>
            <person name="Hauser L."/>
            <person name="Challacombe J.F."/>
            <person name="Green L."/>
            <person name="Lindler L.E."/>
            <person name="Nikolich M.P."/>
            <person name="Richardson P."/>
        </authorList>
    </citation>
    <scope>NUCLEOTIDE SEQUENCE [LARGE SCALE GENOMIC DNA]</scope>
    <source>
        <strain>PB1/+</strain>
    </source>
</reference>
<feature type="chain" id="PRO_1000128874" description="Adenosine deaminase">
    <location>
        <begin position="1"/>
        <end position="334"/>
    </location>
</feature>
<feature type="active site" description="Proton donor" evidence="1">
    <location>
        <position position="200"/>
    </location>
</feature>
<feature type="binding site" evidence="1">
    <location>
        <position position="12"/>
    </location>
    <ligand>
        <name>Zn(2+)</name>
        <dbReference type="ChEBI" id="CHEBI:29105"/>
        <note>catalytic</note>
    </ligand>
</feature>
<feature type="binding site" evidence="1">
    <location>
        <position position="14"/>
    </location>
    <ligand>
        <name>substrate</name>
    </ligand>
</feature>
<feature type="binding site" evidence="1">
    <location>
        <position position="14"/>
    </location>
    <ligand>
        <name>Zn(2+)</name>
        <dbReference type="ChEBI" id="CHEBI:29105"/>
        <note>catalytic</note>
    </ligand>
</feature>
<feature type="binding site" evidence="1">
    <location>
        <position position="16"/>
    </location>
    <ligand>
        <name>substrate</name>
    </ligand>
</feature>
<feature type="binding site" evidence="1">
    <location>
        <position position="170"/>
    </location>
    <ligand>
        <name>substrate</name>
    </ligand>
</feature>
<feature type="binding site" evidence="1">
    <location>
        <position position="197"/>
    </location>
    <ligand>
        <name>Zn(2+)</name>
        <dbReference type="ChEBI" id="CHEBI:29105"/>
        <note>catalytic</note>
    </ligand>
</feature>
<feature type="binding site" evidence="1">
    <location>
        <position position="278"/>
    </location>
    <ligand>
        <name>Zn(2+)</name>
        <dbReference type="ChEBI" id="CHEBI:29105"/>
        <note>catalytic</note>
    </ligand>
</feature>
<feature type="binding site" evidence="1">
    <location>
        <position position="279"/>
    </location>
    <ligand>
        <name>substrate</name>
    </ligand>
</feature>
<feature type="site" description="Important for catalytic activity" evidence="1">
    <location>
        <position position="221"/>
    </location>
</feature>
<sequence length="334" mass="36650">MIDPRLPLTDIHRHLDGNIRAQTILDLGQQFNLNLPANELDTLRPHVQITKTEPDLVSFLQKLDWGVAVLGSLDACRRVAYENVEDAAHAGLHYAELRFSPFYMAMKHQLPITGVVEAVIDGIASGCRDFNIDIRLIGILSRTFGEQACLQELDSLLAHREGITALDLAGDELGFPGSLFRRHFNRARDAGLRITVHAGEAAGPESIWQAIRELGAERIGHGVKAVEDRKLMDYLAEHKIGIESCLTSNIQTSTVVSLATHPLATFLRHGIVASINTDDPAVQGIEIANEYLVAAPAAGLTPHEIRQAQANGLEMAFISEQEKQALRDKVFPIS</sequence>
<keyword id="KW-0378">Hydrolase</keyword>
<keyword id="KW-0479">Metal-binding</keyword>
<keyword id="KW-0546">Nucleotide metabolism</keyword>
<keyword id="KW-0862">Zinc</keyword>
<dbReference type="EC" id="3.5.4.4" evidence="1"/>
<dbReference type="EMBL" id="CP001048">
    <property type="protein sequence ID" value="ACC89211.1"/>
    <property type="molecule type" value="Genomic_DNA"/>
</dbReference>
<dbReference type="RefSeq" id="WP_011192469.1">
    <property type="nucleotide sequence ID" value="NZ_CP009780.1"/>
</dbReference>
<dbReference type="SMR" id="B2K4L5"/>
<dbReference type="GeneID" id="49785824"/>
<dbReference type="KEGG" id="ypb:YPTS_2250"/>
<dbReference type="PATRIC" id="fig|502801.10.peg.1645"/>
<dbReference type="GO" id="GO:0005829">
    <property type="term" value="C:cytosol"/>
    <property type="evidence" value="ECO:0007669"/>
    <property type="project" value="TreeGrafter"/>
</dbReference>
<dbReference type="GO" id="GO:0046936">
    <property type="term" value="F:2'-deoxyadenosine deaminase activity"/>
    <property type="evidence" value="ECO:0007669"/>
    <property type="project" value="RHEA"/>
</dbReference>
<dbReference type="GO" id="GO:0004000">
    <property type="term" value="F:adenosine deaminase activity"/>
    <property type="evidence" value="ECO:0007669"/>
    <property type="project" value="UniProtKB-UniRule"/>
</dbReference>
<dbReference type="GO" id="GO:0008270">
    <property type="term" value="F:zinc ion binding"/>
    <property type="evidence" value="ECO:0007669"/>
    <property type="project" value="UniProtKB-UniRule"/>
</dbReference>
<dbReference type="GO" id="GO:0006154">
    <property type="term" value="P:adenosine catabolic process"/>
    <property type="evidence" value="ECO:0007669"/>
    <property type="project" value="TreeGrafter"/>
</dbReference>
<dbReference type="GO" id="GO:0043103">
    <property type="term" value="P:hypoxanthine salvage"/>
    <property type="evidence" value="ECO:0007669"/>
    <property type="project" value="TreeGrafter"/>
</dbReference>
<dbReference type="GO" id="GO:0046103">
    <property type="term" value="P:inosine biosynthetic process"/>
    <property type="evidence" value="ECO:0007669"/>
    <property type="project" value="TreeGrafter"/>
</dbReference>
<dbReference type="GO" id="GO:0009117">
    <property type="term" value="P:nucleotide metabolic process"/>
    <property type="evidence" value="ECO:0007669"/>
    <property type="project" value="UniProtKB-KW"/>
</dbReference>
<dbReference type="GO" id="GO:0009168">
    <property type="term" value="P:purine ribonucleoside monophosphate biosynthetic process"/>
    <property type="evidence" value="ECO:0007669"/>
    <property type="project" value="UniProtKB-UniRule"/>
</dbReference>
<dbReference type="CDD" id="cd01320">
    <property type="entry name" value="ADA"/>
    <property type="match status" value="1"/>
</dbReference>
<dbReference type="FunFam" id="3.20.20.140:FF:000009">
    <property type="entry name" value="Adenosine deaminase"/>
    <property type="match status" value="1"/>
</dbReference>
<dbReference type="Gene3D" id="3.20.20.140">
    <property type="entry name" value="Metal-dependent hydrolases"/>
    <property type="match status" value="1"/>
</dbReference>
<dbReference type="HAMAP" id="MF_00540">
    <property type="entry name" value="A_deaminase"/>
    <property type="match status" value="1"/>
</dbReference>
<dbReference type="InterPro" id="IPR006650">
    <property type="entry name" value="A/AMP_deam_AS"/>
</dbReference>
<dbReference type="InterPro" id="IPR028893">
    <property type="entry name" value="A_deaminase"/>
</dbReference>
<dbReference type="InterPro" id="IPR001365">
    <property type="entry name" value="A_deaminase_dom"/>
</dbReference>
<dbReference type="InterPro" id="IPR006330">
    <property type="entry name" value="Ado/ade_deaminase"/>
</dbReference>
<dbReference type="InterPro" id="IPR032466">
    <property type="entry name" value="Metal_Hydrolase"/>
</dbReference>
<dbReference type="NCBIfam" id="TIGR01430">
    <property type="entry name" value="aden_deam"/>
    <property type="match status" value="1"/>
</dbReference>
<dbReference type="NCBIfam" id="NF006846">
    <property type="entry name" value="PRK09358.1-1"/>
    <property type="match status" value="1"/>
</dbReference>
<dbReference type="PANTHER" id="PTHR11409">
    <property type="entry name" value="ADENOSINE DEAMINASE"/>
    <property type="match status" value="1"/>
</dbReference>
<dbReference type="PANTHER" id="PTHR11409:SF43">
    <property type="entry name" value="ADENOSINE DEAMINASE"/>
    <property type="match status" value="1"/>
</dbReference>
<dbReference type="Pfam" id="PF00962">
    <property type="entry name" value="A_deaminase"/>
    <property type="match status" value="1"/>
</dbReference>
<dbReference type="SUPFAM" id="SSF51556">
    <property type="entry name" value="Metallo-dependent hydrolases"/>
    <property type="match status" value="1"/>
</dbReference>
<dbReference type="PROSITE" id="PS00485">
    <property type="entry name" value="A_DEAMINASE"/>
    <property type="match status" value="1"/>
</dbReference>
<accession>B2K4L5</accession>
<gene>
    <name evidence="1" type="primary">add</name>
    <name type="ordered locus">YPTS_2250</name>
</gene>
<name>ADD_YERPB</name>